<keyword id="KW-0028">Amino-acid biosynthesis</keyword>
<keyword id="KW-0198">Cysteine biosynthesis</keyword>
<keyword id="KW-0249">Electron transport</keyword>
<keyword id="KW-0274">FAD</keyword>
<keyword id="KW-0285">Flavoprotein</keyword>
<keyword id="KW-0288">FMN</keyword>
<keyword id="KW-0521">NADP</keyword>
<keyword id="KW-0560">Oxidoreductase</keyword>
<keyword id="KW-0813">Transport</keyword>
<name>CYSJ_SHIF8</name>
<organism>
    <name type="scientific">Shigella flexneri serotype 5b (strain 8401)</name>
    <dbReference type="NCBI Taxonomy" id="373384"/>
    <lineage>
        <taxon>Bacteria</taxon>
        <taxon>Pseudomonadati</taxon>
        <taxon>Pseudomonadota</taxon>
        <taxon>Gammaproteobacteria</taxon>
        <taxon>Enterobacterales</taxon>
        <taxon>Enterobacteriaceae</taxon>
        <taxon>Shigella</taxon>
    </lineage>
</organism>
<dbReference type="EC" id="1.8.1.2" evidence="1"/>
<dbReference type="EMBL" id="CP000266">
    <property type="protein sequence ID" value="ABF04827.1"/>
    <property type="molecule type" value="Genomic_DNA"/>
</dbReference>
<dbReference type="RefSeq" id="WP_000211949.1">
    <property type="nucleotide sequence ID" value="NC_008258.1"/>
</dbReference>
<dbReference type="SMR" id="Q0T1I8"/>
<dbReference type="KEGG" id="sfv:SFV_2741"/>
<dbReference type="HOGENOM" id="CLU_001570_17_7_6"/>
<dbReference type="UniPathway" id="UPA00140">
    <property type="reaction ID" value="UER00207"/>
</dbReference>
<dbReference type="Proteomes" id="UP000000659">
    <property type="component" value="Chromosome"/>
</dbReference>
<dbReference type="GO" id="GO:0005829">
    <property type="term" value="C:cytosol"/>
    <property type="evidence" value="ECO:0007669"/>
    <property type="project" value="TreeGrafter"/>
</dbReference>
<dbReference type="GO" id="GO:0050660">
    <property type="term" value="F:flavin adenine dinucleotide binding"/>
    <property type="evidence" value="ECO:0007669"/>
    <property type="project" value="InterPro"/>
</dbReference>
<dbReference type="GO" id="GO:0010181">
    <property type="term" value="F:FMN binding"/>
    <property type="evidence" value="ECO:0007669"/>
    <property type="project" value="InterPro"/>
</dbReference>
<dbReference type="GO" id="GO:0004783">
    <property type="term" value="F:sulfite reductase (NADPH) activity"/>
    <property type="evidence" value="ECO:0007669"/>
    <property type="project" value="UniProtKB-UniRule"/>
</dbReference>
<dbReference type="GO" id="GO:0019344">
    <property type="term" value="P:cysteine biosynthetic process"/>
    <property type="evidence" value="ECO:0007669"/>
    <property type="project" value="UniProtKB-KW"/>
</dbReference>
<dbReference type="GO" id="GO:0070814">
    <property type="term" value="P:hydrogen sulfide biosynthetic process"/>
    <property type="evidence" value="ECO:0007669"/>
    <property type="project" value="UniProtKB-UniRule"/>
</dbReference>
<dbReference type="GO" id="GO:0000103">
    <property type="term" value="P:sulfate assimilation"/>
    <property type="evidence" value="ECO:0007669"/>
    <property type="project" value="UniProtKB-UniRule"/>
</dbReference>
<dbReference type="CDD" id="cd06199">
    <property type="entry name" value="SiR"/>
    <property type="match status" value="1"/>
</dbReference>
<dbReference type="FunFam" id="3.40.50.80:FF:000001">
    <property type="entry name" value="NADPH--cytochrome P450 reductase 1"/>
    <property type="match status" value="1"/>
</dbReference>
<dbReference type="FunFam" id="1.20.990.10:FF:000004">
    <property type="entry name" value="Sulfite reductase [NADPH] flavoprotein alpha-component"/>
    <property type="match status" value="1"/>
</dbReference>
<dbReference type="FunFam" id="3.40.50.360:FF:000018">
    <property type="entry name" value="Sulfite reductase [NADPH] flavoprotein alpha-component"/>
    <property type="match status" value="1"/>
</dbReference>
<dbReference type="Gene3D" id="3.40.50.360">
    <property type="match status" value="1"/>
</dbReference>
<dbReference type="Gene3D" id="1.20.990.10">
    <property type="entry name" value="NADPH-cytochrome p450 Reductase, Chain A, domain 3"/>
    <property type="match status" value="1"/>
</dbReference>
<dbReference type="Gene3D" id="3.40.50.80">
    <property type="entry name" value="Nucleotide-binding domain of ferredoxin-NADP reductase (FNR) module"/>
    <property type="match status" value="1"/>
</dbReference>
<dbReference type="Gene3D" id="2.40.30.10">
    <property type="entry name" value="Translation factors"/>
    <property type="match status" value="1"/>
</dbReference>
<dbReference type="HAMAP" id="MF_01541">
    <property type="entry name" value="CysJ"/>
    <property type="match status" value="1"/>
</dbReference>
<dbReference type="InterPro" id="IPR010199">
    <property type="entry name" value="CysJ"/>
</dbReference>
<dbReference type="InterPro" id="IPR003097">
    <property type="entry name" value="CysJ-like_FAD-binding"/>
</dbReference>
<dbReference type="InterPro" id="IPR029758">
    <property type="entry name" value="CysJ_Proteobact"/>
</dbReference>
<dbReference type="InterPro" id="IPR017927">
    <property type="entry name" value="FAD-bd_FR_type"/>
</dbReference>
<dbReference type="InterPro" id="IPR001094">
    <property type="entry name" value="Flavdoxin-like"/>
</dbReference>
<dbReference type="InterPro" id="IPR008254">
    <property type="entry name" value="Flavodoxin/NO_synth"/>
</dbReference>
<dbReference type="InterPro" id="IPR001709">
    <property type="entry name" value="Flavoprot_Pyr_Nucl_cyt_Rdtase"/>
</dbReference>
<dbReference type="InterPro" id="IPR029039">
    <property type="entry name" value="Flavoprotein-like_sf"/>
</dbReference>
<dbReference type="InterPro" id="IPR039261">
    <property type="entry name" value="FNR_nucleotide-bd"/>
</dbReference>
<dbReference type="InterPro" id="IPR023173">
    <property type="entry name" value="NADPH_Cyt_P450_Rdtase_alpha"/>
</dbReference>
<dbReference type="InterPro" id="IPR001433">
    <property type="entry name" value="OxRdtase_FAD/NAD-bd"/>
</dbReference>
<dbReference type="InterPro" id="IPR017938">
    <property type="entry name" value="Riboflavin_synthase-like_b-brl"/>
</dbReference>
<dbReference type="NCBIfam" id="TIGR01931">
    <property type="entry name" value="cysJ"/>
    <property type="match status" value="1"/>
</dbReference>
<dbReference type="NCBIfam" id="NF004859">
    <property type="entry name" value="PRK06214.1"/>
    <property type="match status" value="1"/>
</dbReference>
<dbReference type="NCBIfam" id="NF008197">
    <property type="entry name" value="PRK10953.1"/>
    <property type="match status" value="1"/>
</dbReference>
<dbReference type="PANTHER" id="PTHR19384:SF128">
    <property type="entry name" value="NADPH OXIDOREDUCTASE A"/>
    <property type="match status" value="1"/>
</dbReference>
<dbReference type="PANTHER" id="PTHR19384">
    <property type="entry name" value="NITRIC OXIDE SYNTHASE-RELATED"/>
    <property type="match status" value="1"/>
</dbReference>
<dbReference type="Pfam" id="PF00667">
    <property type="entry name" value="FAD_binding_1"/>
    <property type="match status" value="1"/>
</dbReference>
<dbReference type="Pfam" id="PF00258">
    <property type="entry name" value="Flavodoxin_1"/>
    <property type="match status" value="1"/>
</dbReference>
<dbReference type="Pfam" id="PF00175">
    <property type="entry name" value="NAD_binding_1"/>
    <property type="match status" value="1"/>
</dbReference>
<dbReference type="PIRSF" id="PIRSF000207">
    <property type="entry name" value="SiR-FP_CysJ"/>
    <property type="match status" value="1"/>
</dbReference>
<dbReference type="PRINTS" id="PR00369">
    <property type="entry name" value="FLAVODOXIN"/>
</dbReference>
<dbReference type="PRINTS" id="PR00371">
    <property type="entry name" value="FPNCR"/>
</dbReference>
<dbReference type="SUPFAM" id="SSF52343">
    <property type="entry name" value="Ferredoxin reductase-like, C-terminal NADP-linked domain"/>
    <property type="match status" value="1"/>
</dbReference>
<dbReference type="SUPFAM" id="SSF52218">
    <property type="entry name" value="Flavoproteins"/>
    <property type="match status" value="1"/>
</dbReference>
<dbReference type="SUPFAM" id="SSF63380">
    <property type="entry name" value="Riboflavin synthase domain-like"/>
    <property type="match status" value="1"/>
</dbReference>
<dbReference type="PROSITE" id="PS51384">
    <property type="entry name" value="FAD_FR"/>
    <property type="match status" value="1"/>
</dbReference>
<dbReference type="PROSITE" id="PS50902">
    <property type="entry name" value="FLAVODOXIN_LIKE"/>
    <property type="match status" value="1"/>
</dbReference>
<sequence length="599" mass="66343">MTTQVPPSALLPLNPEQLARLQAATTDLTPTQLAWVSGYFWGVLNQQPVALAVTPAPAAEMPGITIISASQTGNARRVAEALRDDLLAAKLNVKLVNAGDYKFKQIASEKLLIVVTSTQGEGEPPEEAVALHKFLFSKKAPKLENTAFAVFSLGDSSYEFFCQSGKDFDSKLAELGGERLLDRVDSDVEYQAAASEWRARVVDALKSRAPVAAPSQSVATGAVNEIHTSPYSKDAPLVASLSVNQKITGRNSEKDVRHIEIDLGDSGLRYQPGDALGVWYQNDPALVKELVELLWLTGDEPVTVEGKTLPLNEALQWHFELTVNTANIVENYATLTRSETLLPLVGDKAKLQHYAATTLIVDMVRFSPAQLDAEALINLLRPLTPRLYSIASSQAEVENEVHVTVGVVRYDVEGRARAGGASSFLADRVEEEGEVRVFIEHNDNFRLPANLETPVIMIGPGTGIAPFRAFMQQRAADEAPGKNWLFFGNPHFTEDFLYQVEWQRYVKEGVLTRIDLAWSRDQKEKVYVQDKLREQGAELWRWINDGAHIYVCGDANRMAKDVEQALLEVIAEFGGMDTEAADEFLSELRVERRYQRDVY</sequence>
<protein>
    <recommendedName>
        <fullName evidence="1">Sulfite reductase [NADPH] flavoprotein alpha-component</fullName>
        <shortName evidence="1">SiR-FP</shortName>
        <ecNumber evidence="1">1.8.1.2</ecNumber>
    </recommendedName>
</protein>
<feature type="chain" id="PRO_0000292975" description="Sulfite reductase [NADPH] flavoprotein alpha-component">
    <location>
        <begin position="1"/>
        <end position="599"/>
    </location>
</feature>
<feature type="domain" description="Flavodoxin-like" evidence="1">
    <location>
        <begin position="64"/>
        <end position="202"/>
    </location>
</feature>
<feature type="domain" description="FAD-binding FR-type" evidence="1">
    <location>
        <begin position="234"/>
        <end position="448"/>
    </location>
</feature>
<feature type="binding site" evidence="1">
    <location>
        <begin position="70"/>
        <end position="75"/>
    </location>
    <ligand>
        <name>FMN</name>
        <dbReference type="ChEBI" id="CHEBI:58210"/>
    </ligand>
</feature>
<feature type="binding site" evidence="1">
    <location>
        <begin position="117"/>
        <end position="120"/>
    </location>
    <ligand>
        <name>FMN</name>
        <dbReference type="ChEBI" id="CHEBI:58210"/>
    </ligand>
</feature>
<feature type="binding site" evidence="1">
    <location>
        <begin position="153"/>
        <end position="162"/>
    </location>
    <ligand>
        <name>FMN</name>
        <dbReference type="ChEBI" id="CHEBI:58210"/>
    </ligand>
</feature>
<feature type="binding site" evidence="1">
    <location>
        <position position="322"/>
    </location>
    <ligand>
        <name>FAD</name>
        <dbReference type="ChEBI" id="CHEBI:57692"/>
    </ligand>
</feature>
<feature type="binding site" evidence="1">
    <location>
        <position position="356"/>
    </location>
    <ligand>
        <name>FAD</name>
        <dbReference type="ChEBI" id="CHEBI:57692"/>
    </ligand>
</feature>
<feature type="binding site" evidence="1">
    <location>
        <begin position="386"/>
        <end position="389"/>
    </location>
    <ligand>
        <name>FAD</name>
        <dbReference type="ChEBI" id="CHEBI:57692"/>
    </ligand>
</feature>
<feature type="binding site" evidence="1">
    <location>
        <begin position="404"/>
        <end position="406"/>
    </location>
    <ligand>
        <name>FAD</name>
        <dbReference type="ChEBI" id="CHEBI:57692"/>
    </ligand>
</feature>
<feature type="binding site" evidence="1">
    <location>
        <position position="410"/>
    </location>
    <ligand>
        <name>FAD</name>
        <dbReference type="ChEBI" id="CHEBI:57692"/>
    </ligand>
</feature>
<feature type="binding site" evidence="1">
    <location>
        <begin position="419"/>
        <end position="422"/>
    </location>
    <ligand>
        <name>FAD</name>
        <dbReference type="ChEBI" id="CHEBI:57692"/>
    </ligand>
</feature>
<feature type="binding site" evidence="1">
    <location>
        <begin position="519"/>
        <end position="520"/>
    </location>
    <ligand>
        <name>NADP(+)</name>
        <dbReference type="ChEBI" id="CHEBI:58349"/>
    </ligand>
</feature>
<feature type="binding site" evidence="1">
    <location>
        <begin position="525"/>
        <end position="529"/>
    </location>
    <ligand>
        <name>NADP(+)</name>
        <dbReference type="ChEBI" id="CHEBI:58349"/>
    </ligand>
</feature>
<feature type="binding site" evidence="1">
    <location>
        <position position="561"/>
    </location>
    <ligand>
        <name>NADP(+)</name>
        <dbReference type="ChEBI" id="CHEBI:58349"/>
    </ligand>
</feature>
<feature type="binding site" evidence="1">
    <location>
        <position position="599"/>
    </location>
    <ligand>
        <name>FAD</name>
        <dbReference type="ChEBI" id="CHEBI:57692"/>
    </ligand>
</feature>
<proteinExistence type="inferred from homology"/>
<gene>
    <name evidence="1" type="primary">cysJ</name>
    <name type="ordered locus">SFV_2741</name>
</gene>
<evidence type="ECO:0000255" key="1">
    <source>
        <dbReference type="HAMAP-Rule" id="MF_01541"/>
    </source>
</evidence>
<accession>Q0T1I8</accession>
<comment type="function">
    <text evidence="1">Component of the sulfite reductase complex that catalyzes the 6-electron reduction of sulfite to sulfide. This is one of several activities required for the biosynthesis of L-cysteine from sulfate. The flavoprotein component catalyzes the electron flow from NADPH -&gt; FAD -&gt; FMN to the hemoprotein component.</text>
</comment>
<comment type="catalytic activity">
    <reaction evidence="1">
        <text>hydrogen sulfide + 3 NADP(+) + 3 H2O = sulfite + 3 NADPH + 4 H(+)</text>
        <dbReference type="Rhea" id="RHEA:13801"/>
        <dbReference type="ChEBI" id="CHEBI:15377"/>
        <dbReference type="ChEBI" id="CHEBI:15378"/>
        <dbReference type="ChEBI" id="CHEBI:17359"/>
        <dbReference type="ChEBI" id="CHEBI:29919"/>
        <dbReference type="ChEBI" id="CHEBI:57783"/>
        <dbReference type="ChEBI" id="CHEBI:58349"/>
        <dbReference type="EC" id="1.8.1.2"/>
    </reaction>
</comment>
<comment type="cofactor">
    <cofactor evidence="1">
        <name>FAD</name>
        <dbReference type="ChEBI" id="CHEBI:57692"/>
    </cofactor>
    <text evidence="1">Binds 1 FAD per subunit.</text>
</comment>
<comment type="cofactor">
    <cofactor evidence="1">
        <name>FMN</name>
        <dbReference type="ChEBI" id="CHEBI:58210"/>
    </cofactor>
    <text evidence="1">Binds 1 FMN per subunit.</text>
</comment>
<comment type="pathway">
    <text evidence="1">Sulfur metabolism; hydrogen sulfide biosynthesis; hydrogen sulfide from sulfite (NADPH route): step 1/1.</text>
</comment>
<comment type="subunit">
    <text evidence="1">Alpha(8)-beta(8). The alpha component is a flavoprotein, the beta component is a hemoprotein.</text>
</comment>
<comment type="similarity">
    <text evidence="1">Belongs to the NADPH-dependent sulphite reductase flavoprotein subunit CysJ family.</text>
</comment>
<comment type="similarity">
    <text evidence="1">In the N-terminal section; belongs to the flavodoxin family.</text>
</comment>
<comment type="similarity">
    <text evidence="1">In the C-terminal section; belongs to the flavoprotein pyridine nucleotide cytochrome reductase family.</text>
</comment>
<reference key="1">
    <citation type="journal article" date="2006" name="BMC Genomics">
        <title>Complete genome sequence of Shigella flexneri 5b and comparison with Shigella flexneri 2a.</title>
        <authorList>
            <person name="Nie H."/>
            <person name="Yang F."/>
            <person name="Zhang X."/>
            <person name="Yang J."/>
            <person name="Chen L."/>
            <person name="Wang J."/>
            <person name="Xiong Z."/>
            <person name="Peng J."/>
            <person name="Sun L."/>
            <person name="Dong J."/>
            <person name="Xue Y."/>
            <person name="Xu X."/>
            <person name="Chen S."/>
            <person name="Yao Z."/>
            <person name="Shen Y."/>
            <person name="Jin Q."/>
        </authorList>
    </citation>
    <scope>NUCLEOTIDE SEQUENCE [LARGE SCALE GENOMIC DNA]</scope>
    <source>
        <strain>8401</strain>
    </source>
</reference>